<keyword id="KW-1003">Cell membrane</keyword>
<keyword id="KW-0966">Cell projection</keyword>
<keyword id="KW-0297">G-protein coupled receptor</keyword>
<keyword id="KW-0325">Glycoprotein</keyword>
<keyword id="KW-0449">Lipoprotein</keyword>
<keyword id="KW-0472">Membrane</keyword>
<keyword id="KW-0496">Mitochondrion</keyword>
<keyword id="KW-1000">Mitochondrion outer membrane</keyword>
<keyword id="KW-0564">Palmitate</keyword>
<keyword id="KW-0597">Phosphoprotein</keyword>
<keyword id="KW-0675">Receptor</keyword>
<keyword id="KW-1185">Reference proteome</keyword>
<keyword id="KW-0770">Synapse</keyword>
<keyword id="KW-0807">Transducer</keyword>
<keyword id="KW-0812">Transmembrane</keyword>
<keyword id="KW-1133">Transmembrane helix</keyword>
<name>CNR1_MACMU</name>
<dbReference type="EMBL" id="AF286025">
    <property type="protein sequence ID" value="AAF97250.1"/>
    <property type="molecule type" value="mRNA"/>
</dbReference>
<dbReference type="RefSeq" id="NP_001027997.1">
    <property type="nucleotide sequence ID" value="NM_001032825.1"/>
</dbReference>
<dbReference type="SMR" id="Q71SP5"/>
<dbReference type="FunCoup" id="Q71SP5">
    <property type="interactions" value="1234"/>
</dbReference>
<dbReference type="STRING" id="9544.ENSMMUP00000069932"/>
<dbReference type="GlyCosmos" id="Q71SP5">
    <property type="glycosylation" value="2 sites, No reported glycans"/>
</dbReference>
<dbReference type="PaxDb" id="9544-ENSMMUP00000001031"/>
<dbReference type="Ensembl" id="ENSMMUT00000104316.1">
    <property type="protein sequence ID" value="ENSMMUP00000069932.1"/>
    <property type="gene ID" value="ENSMMUG00000000763.4"/>
</dbReference>
<dbReference type="GeneID" id="574142"/>
<dbReference type="KEGG" id="mcc:574142"/>
<dbReference type="CTD" id="1268"/>
<dbReference type="VEuPathDB" id="HostDB:ENSMMUG00000000763"/>
<dbReference type="VGNC" id="VGNC:71280">
    <property type="gene designation" value="CNR1"/>
</dbReference>
<dbReference type="eggNOG" id="KOG3656">
    <property type="taxonomic scope" value="Eukaryota"/>
</dbReference>
<dbReference type="GeneTree" id="ENSGT01120000271819"/>
<dbReference type="InParanoid" id="Q71SP5"/>
<dbReference type="OMA" id="HKHANSA"/>
<dbReference type="OrthoDB" id="5966748at2759"/>
<dbReference type="Proteomes" id="UP000006718">
    <property type="component" value="Chromosome 4"/>
</dbReference>
<dbReference type="Bgee" id="ENSMMUG00000000763">
    <property type="expression patterns" value="Expressed in cerebellum and 14 other cell types or tissues"/>
</dbReference>
<dbReference type="ExpressionAtlas" id="Q71SP5">
    <property type="expression patterns" value="baseline"/>
</dbReference>
<dbReference type="GO" id="GO:0015629">
    <property type="term" value="C:actin cytoskeleton"/>
    <property type="evidence" value="ECO:0007669"/>
    <property type="project" value="Ensembl"/>
</dbReference>
<dbReference type="GO" id="GO:0005737">
    <property type="term" value="C:cytoplasm"/>
    <property type="evidence" value="ECO:0000318"/>
    <property type="project" value="GO_Central"/>
</dbReference>
<dbReference type="GO" id="GO:0098982">
    <property type="term" value="C:GABA-ergic synapse"/>
    <property type="evidence" value="ECO:0007669"/>
    <property type="project" value="Ensembl"/>
</dbReference>
<dbReference type="GO" id="GO:0098978">
    <property type="term" value="C:glutamatergic synapse"/>
    <property type="evidence" value="ECO:0007669"/>
    <property type="project" value="Ensembl"/>
</dbReference>
<dbReference type="GO" id="GO:0030426">
    <property type="term" value="C:growth cone"/>
    <property type="evidence" value="ECO:0007669"/>
    <property type="project" value="Ensembl"/>
</dbReference>
<dbReference type="GO" id="GO:0005741">
    <property type="term" value="C:mitochondrial outer membrane"/>
    <property type="evidence" value="ECO:0007669"/>
    <property type="project" value="UniProtKB-SubCell"/>
</dbReference>
<dbReference type="GO" id="GO:0005886">
    <property type="term" value="C:plasma membrane"/>
    <property type="evidence" value="ECO:0000318"/>
    <property type="project" value="GO_Central"/>
</dbReference>
<dbReference type="GO" id="GO:0042734">
    <property type="term" value="C:presynaptic membrane"/>
    <property type="evidence" value="ECO:0007669"/>
    <property type="project" value="Ensembl"/>
</dbReference>
<dbReference type="GO" id="GO:0004949">
    <property type="term" value="F:cannabinoid receptor activity"/>
    <property type="evidence" value="ECO:0000250"/>
    <property type="project" value="UniProtKB"/>
</dbReference>
<dbReference type="GO" id="GO:0004930">
    <property type="term" value="F:G protein-coupled receptor activity"/>
    <property type="evidence" value="ECO:0000318"/>
    <property type="project" value="GO_Central"/>
</dbReference>
<dbReference type="GO" id="GO:0042802">
    <property type="term" value="F:identical protein binding"/>
    <property type="evidence" value="ECO:0007669"/>
    <property type="project" value="Ensembl"/>
</dbReference>
<dbReference type="GO" id="GO:0007189">
    <property type="term" value="P:adenylate cyclase-activating G protein-coupled receptor signaling pathway"/>
    <property type="evidence" value="ECO:0000318"/>
    <property type="project" value="GO_Central"/>
</dbReference>
<dbReference type="GO" id="GO:0007188">
    <property type="term" value="P:adenylate cyclase-modulating G protein-coupled receptor signaling pathway"/>
    <property type="evidence" value="ECO:0000250"/>
    <property type="project" value="UniProtKB"/>
</dbReference>
<dbReference type="GO" id="GO:0007413">
    <property type="term" value="P:axonal fasciculation"/>
    <property type="evidence" value="ECO:0007669"/>
    <property type="project" value="Ensembl"/>
</dbReference>
<dbReference type="GO" id="GO:0042593">
    <property type="term" value="P:glucose homeostasis"/>
    <property type="evidence" value="ECO:0007669"/>
    <property type="project" value="Ensembl"/>
</dbReference>
<dbReference type="GO" id="GO:0019222">
    <property type="term" value="P:regulation of metabolic process"/>
    <property type="evidence" value="ECO:0000318"/>
    <property type="project" value="GO_Central"/>
</dbReference>
<dbReference type="GO" id="GO:0099509">
    <property type="term" value="P:regulation of presynaptic cytosolic calcium ion concentration"/>
    <property type="evidence" value="ECO:0007669"/>
    <property type="project" value="Ensembl"/>
</dbReference>
<dbReference type="GO" id="GO:0098921">
    <property type="term" value="P:retrograde trans-synaptic signaling by endocannabinoid"/>
    <property type="evidence" value="ECO:0007669"/>
    <property type="project" value="Ensembl"/>
</dbReference>
<dbReference type="CDD" id="cd15340">
    <property type="entry name" value="7tmA_CB1"/>
    <property type="match status" value="1"/>
</dbReference>
<dbReference type="FunFam" id="1.20.1070.10:FF:000072">
    <property type="entry name" value="Cannabinoid receptor 1"/>
    <property type="match status" value="1"/>
</dbReference>
<dbReference type="Gene3D" id="1.20.1070.10">
    <property type="entry name" value="Rhodopsin 7-helix transmembrane proteins"/>
    <property type="match status" value="1"/>
</dbReference>
<dbReference type="InterPro" id="IPR000810">
    <property type="entry name" value="Canbinoid_rcpt_1"/>
</dbReference>
<dbReference type="InterPro" id="IPR002230">
    <property type="entry name" value="Cnbnoid_rcpt"/>
</dbReference>
<dbReference type="InterPro" id="IPR000276">
    <property type="entry name" value="GPCR_Rhodpsn"/>
</dbReference>
<dbReference type="InterPro" id="IPR017452">
    <property type="entry name" value="GPCR_Rhodpsn_7TM"/>
</dbReference>
<dbReference type="PANTHER" id="PTHR22750">
    <property type="entry name" value="G-PROTEIN COUPLED RECEPTOR"/>
    <property type="match status" value="1"/>
</dbReference>
<dbReference type="Pfam" id="PF00001">
    <property type="entry name" value="7tm_1"/>
    <property type="match status" value="1"/>
</dbReference>
<dbReference type="PIRSF" id="PIRSF037995">
    <property type="entry name" value="Cnoid_rcpt_1"/>
    <property type="match status" value="1"/>
</dbReference>
<dbReference type="PRINTS" id="PR00522">
    <property type="entry name" value="CANABINOID1R"/>
</dbReference>
<dbReference type="PRINTS" id="PR00362">
    <property type="entry name" value="CANNABINOIDR"/>
</dbReference>
<dbReference type="PRINTS" id="PR00237">
    <property type="entry name" value="GPCRRHODOPSN"/>
</dbReference>
<dbReference type="SMART" id="SM01381">
    <property type="entry name" value="7TM_GPCR_Srsx"/>
    <property type="match status" value="1"/>
</dbReference>
<dbReference type="SUPFAM" id="SSF81321">
    <property type="entry name" value="Family A G protein-coupled receptor-like"/>
    <property type="match status" value="1"/>
</dbReference>
<dbReference type="PROSITE" id="PS00237">
    <property type="entry name" value="G_PROTEIN_RECEP_F1_1"/>
    <property type="match status" value="1"/>
</dbReference>
<dbReference type="PROSITE" id="PS50262">
    <property type="entry name" value="G_PROTEIN_RECEP_F1_2"/>
    <property type="match status" value="1"/>
</dbReference>
<accession>Q71SP5</accession>
<evidence type="ECO:0000250" key="1">
    <source>
        <dbReference type="UniProtKB" id="O02777"/>
    </source>
</evidence>
<evidence type="ECO:0000250" key="2">
    <source>
        <dbReference type="UniProtKB" id="P20272"/>
    </source>
</evidence>
<evidence type="ECO:0000250" key="3">
    <source>
        <dbReference type="UniProtKB" id="P21554"/>
    </source>
</evidence>
<evidence type="ECO:0000250" key="4">
    <source>
        <dbReference type="UniProtKB" id="P47746"/>
    </source>
</evidence>
<evidence type="ECO:0000255" key="5"/>
<evidence type="ECO:0000255" key="6">
    <source>
        <dbReference type="PROSITE-ProRule" id="PRU00521"/>
    </source>
</evidence>
<proteinExistence type="evidence at transcript level"/>
<feature type="chain" id="PRO_0000069315" description="Cannabinoid receptor 1">
    <location>
        <begin position="1"/>
        <end position="472"/>
    </location>
</feature>
<feature type="topological domain" description="Extracellular" evidence="3">
    <location>
        <begin position="1"/>
        <end position="120"/>
    </location>
</feature>
<feature type="transmembrane region" description="Helical; Name=1" evidence="3">
    <location>
        <begin position="121"/>
        <end position="141"/>
    </location>
</feature>
<feature type="topological domain" description="Cytoplasmic" evidence="3">
    <location>
        <begin position="142"/>
        <end position="154"/>
    </location>
</feature>
<feature type="transmembrane region" description="Helical; Name=2" evidence="3">
    <location>
        <begin position="155"/>
        <end position="175"/>
    </location>
</feature>
<feature type="topological domain" description="Extracellular" evidence="3">
    <location>
        <begin position="176"/>
        <end position="187"/>
    </location>
</feature>
<feature type="transmembrane region" description="Helical; Name=3" evidence="3">
    <location>
        <begin position="188"/>
        <end position="208"/>
    </location>
</feature>
<feature type="topological domain" description="Cytoplasmic" evidence="3">
    <location>
        <begin position="209"/>
        <end position="232"/>
    </location>
</feature>
<feature type="transmembrane region" description="Helical; Name=4" evidence="3">
    <location>
        <begin position="233"/>
        <end position="253"/>
    </location>
</feature>
<feature type="topological domain" description="Extracellular" evidence="3">
    <location>
        <begin position="254"/>
        <end position="277"/>
    </location>
</feature>
<feature type="transmembrane region" description="Helical; Name=5" evidence="3">
    <location>
        <begin position="278"/>
        <end position="298"/>
    </location>
</feature>
<feature type="topological domain" description="Cytoplasmic" evidence="3">
    <location>
        <begin position="299"/>
        <end position="344"/>
    </location>
</feature>
<feature type="transmembrane region" description="Helical; Name=6" evidence="3">
    <location>
        <begin position="345"/>
        <end position="365"/>
    </location>
</feature>
<feature type="topological domain" description="Extracellular" evidence="3">
    <location>
        <begin position="366"/>
        <end position="377"/>
    </location>
</feature>
<feature type="transmembrane region" description="Helical; Name=7" evidence="3">
    <location>
        <begin position="378"/>
        <end position="398"/>
    </location>
</feature>
<feature type="topological domain" description="Cytoplasmic" evidence="3">
    <location>
        <begin position="399"/>
        <end position="472"/>
    </location>
</feature>
<feature type="region of interest" description="Required for mitochondrial localization" evidence="4">
    <location>
        <begin position="2"/>
        <end position="23"/>
    </location>
</feature>
<feature type="modified residue" description="Phosphoserine" evidence="4">
    <location>
        <position position="425"/>
    </location>
</feature>
<feature type="modified residue" description="Phosphoserine" evidence="4">
    <location>
        <position position="429"/>
    </location>
</feature>
<feature type="lipid moiety-binding region" description="S-palmitoyl cysteine" evidence="3">
    <location>
        <position position="415"/>
    </location>
</feature>
<feature type="glycosylation site" description="N-linked (GlcNAc...) asparagine" evidence="5">
    <location>
        <position position="77"/>
    </location>
</feature>
<feature type="glycosylation site" description="N-linked (GlcNAc...) asparagine" evidence="5">
    <location>
        <position position="83"/>
    </location>
</feature>
<organism>
    <name type="scientific">Macaca mulatta</name>
    <name type="common">Rhesus macaque</name>
    <dbReference type="NCBI Taxonomy" id="9544"/>
    <lineage>
        <taxon>Eukaryota</taxon>
        <taxon>Metazoa</taxon>
        <taxon>Chordata</taxon>
        <taxon>Craniata</taxon>
        <taxon>Vertebrata</taxon>
        <taxon>Euteleostomi</taxon>
        <taxon>Mammalia</taxon>
        <taxon>Eutheria</taxon>
        <taxon>Euarchontoglires</taxon>
        <taxon>Primates</taxon>
        <taxon>Haplorrhini</taxon>
        <taxon>Catarrhini</taxon>
        <taxon>Cercopithecidae</taxon>
        <taxon>Cercopithecinae</taxon>
        <taxon>Macaca</taxon>
    </lineage>
</organism>
<gene>
    <name type="primary">CNR1</name>
</gene>
<comment type="function">
    <text evidence="1 3 4">G-protein coupled receptor for cannabinoids, including endocannabinoids (eCBs), such as N-arachidonoylethanolamide (also called anandamide or AEA) and 2-arachidonoylglycerol (2-AG). Mediates many cannabinoid-induced effects, acting, among others, on food intake, memory loss, gastrointestinal motility, catalepsy, ambulatory activity, anxiety, chronic pain. Signaling typically involves reduction in cyclic AMP (By similarity). In the hypothalamus, may have a dual effect on mitochondrial respiration depending upon the agonist dose and possibly upon the cell type. Increases respiration at low doses, while decreases respiration at high doses. At high doses, CNR1 signal transduction involves G-protein alpha-i protein activation and subsequent inhibition of mitochondrial soluble adenylate cyclase, decrease in cyclic AMP concentration, inhibition of protein kinase A (PKA)-dependent phosphorylation of specific subunits of the mitochondrial electron transport system, including NDUFS2. In the hypothalamus, inhibits leptin-induced reactive oxygen species (ROS) formation and mediates cannabinoid-induced increase in SREBF1 and FASN gene expression. In response to cannabinoids, drives the release of orexigenic beta-endorphin, but not that of melanocyte-stimulating hormone alpha/alpha-MSH, from hypothalamic POMC neurons, hence promoting food intake. In the hippocampus, regulates cellular respiration and energy production in response to cannabinoids. Involved in cannabinoid-dependent depolarization-induced suppression of inhibition (DSI), a process in which depolarization of CA1 postsynaptic pyramidal neurons mobilizes eCBs, which retrogradely activate presynaptic CB1 receptors, transiently decreasing GABAergic inhibitory neurotransmission. Also reduces excitatory synaptic transmission (By similarity). In superior cervical ganglions and cerebral vascular smooth muscle cells, inhibits voltage-gated Ca(2+) channels in a constitutive, as well as agonist-dependent manner (By similarity). Induces leptin production in adipocytes and reduces LRP2-mediated leptin clearance in the kidney, hence participating in hyperleptinemia. In adipose tissue, CNR1 signaling leads to increased expression of SREBF1, ACACA and FASN genes. In the liver, activation by cannabinoids leads to increased de novo lipogenesis and reduced fatty acid catabolism, associated with increased expression of SREBF1/SREBP-1, GCK, ACACA, ACACB and FASN genes. May also affect de novo cholesterol synthesis and HDL-cholesteryl ether uptake. Peripherally modulates energy metabolism. In high carbohydrate diet-induced obesity, may decrease the expression of mitochondrial dihydrolipoyl dehydrogenase/DLD in striated muscles, as well as that of selected glucose/ pyruvate metabolic enzymes, hence affecting energy expenditure through mitochondrial metabolism. In response to cannabinoid anandamide, elicits a pro-inflammatory response in macrophages, which involves NLRP3 inflammasome activation and IL1B and IL18 secretion (By similarity).</text>
</comment>
<comment type="activity regulation">
    <text evidence="3">Hemopressin, a peptide derived from hemoglobin subunit alpha (HBA1 and/or HBA2), acts as an antagonist peptide: hemopressin-binding efficiently blocks cannabinoid receptor CNR1 and subsequent signaling.</text>
</comment>
<comment type="subunit">
    <text evidence="3">Interacts (via C-terminus) with CNRIP1; this interaction attenuates constitutive, but not agonist-dependent, inhibition of voltage-gated Ca(2+) channels in neurons (By similarity). Associates with G protein alpha subunits, including G(i) alpha-1/GNAI1, G(i) alpha-3/GNAI3 and G(o)-alpha/GNAO1; palmitoylation is important for interaction with GNAI3 and GNAO1 (By similarity).</text>
</comment>
<comment type="subcellular location">
    <subcellularLocation>
        <location evidence="4">Cell membrane</location>
        <topology evidence="3">Multi-pass membrane protein</topology>
    </subcellularLocation>
    <subcellularLocation>
        <location evidence="4">Mitochondrion outer membrane</location>
    </subcellularLocation>
    <subcellularLocation>
        <location evidence="2">Cell projection</location>
        <location evidence="2">Axon</location>
    </subcellularLocation>
    <subcellularLocation>
        <location evidence="2">Presynapse</location>
    </subcellularLocation>
    <text evidence="2 4">Unexpectedly, in the mitochondria, the C-terminus is located in the mitochondrial intermembrane space, a compartment topologically considered as extracellular. In canonical seven-transmembrane G-protein coupled receptors, the C-terminus is cytosolic (By similarity). Found on presynaptic axon terminals in some GABAergic neurons in the somatosensory cortex (By similarity).</text>
</comment>
<comment type="PTM">
    <text evidence="3">Palmitoylation at Cys-415 is important for recruitment at both plasma membrane and lipid rafts and association with G protein alpha subunits.</text>
</comment>
<comment type="similarity">
    <text evidence="6">Belongs to the G-protein coupled receptor 1 family.</text>
</comment>
<protein>
    <recommendedName>
        <fullName>Cannabinoid receptor 1</fullName>
        <shortName>CB-R</shortName>
        <shortName>CB1</shortName>
    </recommendedName>
</protein>
<reference key="1">
    <citation type="submission" date="2000-07" db="EMBL/GenBank/DDBJ databases">
        <title>Cloning of the Macaca mulatta cannabinoid receptor (CB-1).</title>
        <authorList>
            <person name="Miller G.M."/>
            <person name="Madras B.K."/>
        </authorList>
    </citation>
    <scope>NUCLEOTIDE SEQUENCE [MRNA]</scope>
    <source>
        <tissue>Cerebellum</tissue>
    </source>
</reference>
<sequence>MKSILDGLADTTFRTITTDLLYVGSNDIQYEDIKGDMASKLGYFPQKFPLTSFRGSPFQEKMTAGDNPQLVPADQVNITEFYNKSLSSFKENEENIQCGENFMDIECFMVLNPSQQLAIAVLSLTLGTFTVLENLLVLCVILHSRSLRCRPSYHFIGSLAVADLLGSVIFVYSFIDFHVFHRKDSRNVFLFKLGGVTASFTASVGSLFLTAIDRYISIHRPLAYKRIVTRPKAVVAFCLMWTIAIVIAVLPLLGWNCEKLQSVCSDIFPHIDETYLMFWIGVTSVLLLFIVYAYMYILWKAHSHAVRMIQRGTQKSIIIHTSEDGKVQVTRPDQARMDIRLAKTLVLILVVLIICWGPLLAIMVYDVFGKMNKLIKTVFAFCSMLCLLNSTVNPIIYALRSKDLRHAFRSMFPSCEGTAQPLDNSMGDSDCLHKHANNAASVHRAAESCIKSTVKIAKVTMSVSTDTSAEAL</sequence>